<protein>
    <recommendedName>
        <fullName>Suppressor of hydroxyurea sensitivity protein 2</fullName>
    </recommendedName>
</protein>
<dbReference type="EMBL" id="DS480386">
    <property type="protein sequence ID" value="EDO18677.1"/>
    <property type="molecule type" value="Genomic_DNA"/>
</dbReference>
<dbReference type="RefSeq" id="XP_001646535.1">
    <property type="nucleotide sequence ID" value="XM_001646485.1"/>
</dbReference>
<dbReference type="SMR" id="A7TGA7"/>
<dbReference type="FunCoup" id="A7TGA7">
    <property type="interactions" value="18"/>
</dbReference>
<dbReference type="STRING" id="436907.A7TGA7"/>
<dbReference type="GeneID" id="5546982"/>
<dbReference type="KEGG" id="vpo:Kpol_1055p32"/>
<dbReference type="eggNOG" id="ENOG502S0XB">
    <property type="taxonomic scope" value="Eukaryota"/>
</dbReference>
<dbReference type="HOGENOM" id="CLU_1115918_0_0_1"/>
<dbReference type="InParanoid" id="A7TGA7"/>
<dbReference type="OMA" id="WLKLHLN"/>
<dbReference type="OrthoDB" id="4066852at2759"/>
<dbReference type="PhylomeDB" id="A7TGA7"/>
<dbReference type="Proteomes" id="UP000000267">
    <property type="component" value="Unassembled WGS sequence"/>
</dbReference>
<dbReference type="GO" id="GO:0005634">
    <property type="term" value="C:nucleus"/>
    <property type="evidence" value="ECO:0007669"/>
    <property type="project" value="UniProtKB-SubCell"/>
</dbReference>
<dbReference type="GO" id="GO:0097196">
    <property type="term" value="C:Shu complex"/>
    <property type="evidence" value="ECO:0007669"/>
    <property type="project" value="EnsemblFungi"/>
</dbReference>
<dbReference type="GO" id="GO:0035861">
    <property type="term" value="C:site of double-strand break"/>
    <property type="evidence" value="ECO:0007669"/>
    <property type="project" value="EnsemblFungi"/>
</dbReference>
<dbReference type="GO" id="GO:0000730">
    <property type="term" value="P:DNA recombinase assembly"/>
    <property type="evidence" value="ECO:0007669"/>
    <property type="project" value="EnsemblFungi"/>
</dbReference>
<dbReference type="GO" id="GO:0043007">
    <property type="term" value="P:maintenance of rDNA"/>
    <property type="evidence" value="ECO:0007669"/>
    <property type="project" value="EnsemblFungi"/>
</dbReference>
<accession>A7TGA7</accession>
<proteinExistence type="inferred from homology"/>
<organism>
    <name type="scientific">Vanderwaltozyma polyspora (strain ATCC 22028 / DSM 70294 / BCRC 21397 / CBS 2163 / NBRC 10782 / NRRL Y-8283 / UCD 57-17)</name>
    <name type="common">Kluyveromyces polysporus</name>
    <dbReference type="NCBI Taxonomy" id="436907"/>
    <lineage>
        <taxon>Eukaryota</taxon>
        <taxon>Fungi</taxon>
        <taxon>Dikarya</taxon>
        <taxon>Ascomycota</taxon>
        <taxon>Saccharomycotina</taxon>
        <taxon>Saccharomycetes</taxon>
        <taxon>Saccharomycetales</taxon>
        <taxon>Saccharomycetaceae</taxon>
        <taxon>Vanderwaltozyma</taxon>
    </lineage>
</organism>
<reference key="1">
    <citation type="journal article" date="2007" name="Proc. Natl. Acad. Sci. U.S.A.">
        <title>Independent sorting-out of thousands of duplicated gene pairs in two yeast species descended from a whole-genome duplication.</title>
        <authorList>
            <person name="Scannell D.R."/>
            <person name="Frank A.C."/>
            <person name="Conant G.C."/>
            <person name="Byrne K.P."/>
            <person name="Woolfit M."/>
            <person name="Wolfe K.H."/>
        </authorList>
    </citation>
    <scope>NUCLEOTIDE SEQUENCE [LARGE SCALE GENOMIC DNA]</scope>
    <source>
        <strain>ATCC 22028 / DSM 70294 / BCRC 21397 / CBS 2163 / NBRC 10782 / NRRL Y-8283 / UCD 57-17</strain>
    </source>
</reference>
<comment type="function">
    <text evidence="1">Plays a role in a RAD51/RAD54-dependent homologous recombination repair (HRR) pathway to repair MMS-induced lesions during S-phase. Required for error-free repair of spontaneous and induced DNA lesions to protect the genome from mutation (By similarity).</text>
</comment>
<comment type="subcellular location">
    <subcellularLocation>
        <location evidence="1">Nucleus</location>
    </subcellularLocation>
</comment>
<comment type="similarity">
    <text evidence="3">Belongs to the SHU2 family.</text>
</comment>
<keyword id="KW-0227">DNA damage</keyword>
<keyword id="KW-0233">DNA recombination</keyword>
<keyword id="KW-0234">DNA repair</keyword>
<keyword id="KW-0539">Nucleus</keyword>
<keyword id="KW-1185">Reference proteome</keyword>
<name>SHU2_VANPO</name>
<feature type="chain" id="PRO_0000409735" description="Suppressor of hydroxyurea sensitivity protein 2">
    <location>
        <begin position="1"/>
        <end position="248"/>
    </location>
</feature>
<feature type="region of interest" description="Disordered" evidence="2">
    <location>
        <begin position="73"/>
        <end position="99"/>
    </location>
</feature>
<feature type="compositionally biased region" description="Low complexity" evidence="2">
    <location>
        <begin position="81"/>
        <end position="97"/>
    </location>
</feature>
<gene>
    <name type="primary">SHU2</name>
    <name type="ORF">Kpol_1055p32</name>
</gene>
<sequence>MDTNKSVIYSQFFSKLINDNNEMDDTMTSFLYYLFPRELFIRALSLLDSGDMFIYVLENGNISSSSMNLVPTVCDSDESRSPSSSGNSNNEASNESNTIDSNSIVEELYDIDTELQNRLIVKTHEKDSPPIYVDLKTWFCSCDEFNSYFNLELQKNQSIPIQDTLIRNIDDIQEFSEDKFAQIDAHSLSKQKYVCHEKLMCPHLLAYSILLASSTKTLRYFTLVNQTVLLIRISNMDEWLKLHINIVS</sequence>
<evidence type="ECO:0000250" key="1"/>
<evidence type="ECO:0000256" key="2">
    <source>
        <dbReference type="SAM" id="MobiDB-lite"/>
    </source>
</evidence>
<evidence type="ECO:0000305" key="3"/>